<reference key="1">
    <citation type="journal article" date="2000" name="Nature">
        <title>Sequence and analysis of chromosome 5 of the plant Arabidopsis thaliana.</title>
        <authorList>
            <person name="Tabata S."/>
            <person name="Kaneko T."/>
            <person name="Nakamura Y."/>
            <person name="Kotani H."/>
            <person name="Kato T."/>
            <person name="Asamizu E."/>
            <person name="Miyajima N."/>
            <person name="Sasamoto S."/>
            <person name="Kimura T."/>
            <person name="Hosouchi T."/>
            <person name="Kawashima K."/>
            <person name="Kohara M."/>
            <person name="Matsumoto M."/>
            <person name="Matsuno A."/>
            <person name="Muraki A."/>
            <person name="Nakayama S."/>
            <person name="Nakazaki N."/>
            <person name="Naruo K."/>
            <person name="Okumura S."/>
            <person name="Shinpo S."/>
            <person name="Takeuchi C."/>
            <person name="Wada T."/>
            <person name="Watanabe A."/>
            <person name="Yamada M."/>
            <person name="Yasuda M."/>
            <person name="Sato S."/>
            <person name="de la Bastide M."/>
            <person name="Huang E."/>
            <person name="Spiegel L."/>
            <person name="Gnoj L."/>
            <person name="O'Shaughnessy A."/>
            <person name="Preston R."/>
            <person name="Habermann K."/>
            <person name="Murray J."/>
            <person name="Johnson D."/>
            <person name="Rohlfing T."/>
            <person name="Nelson J."/>
            <person name="Stoneking T."/>
            <person name="Pepin K."/>
            <person name="Spieth J."/>
            <person name="Sekhon M."/>
            <person name="Armstrong J."/>
            <person name="Becker M."/>
            <person name="Belter E."/>
            <person name="Cordum H."/>
            <person name="Cordes M."/>
            <person name="Courtney L."/>
            <person name="Courtney W."/>
            <person name="Dante M."/>
            <person name="Du H."/>
            <person name="Edwards J."/>
            <person name="Fryman J."/>
            <person name="Haakensen B."/>
            <person name="Lamar E."/>
            <person name="Latreille P."/>
            <person name="Leonard S."/>
            <person name="Meyer R."/>
            <person name="Mulvaney E."/>
            <person name="Ozersky P."/>
            <person name="Riley A."/>
            <person name="Strowmatt C."/>
            <person name="Wagner-McPherson C."/>
            <person name="Wollam A."/>
            <person name="Yoakum M."/>
            <person name="Bell M."/>
            <person name="Dedhia N."/>
            <person name="Parnell L."/>
            <person name="Shah R."/>
            <person name="Rodriguez M."/>
            <person name="Hoon See L."/>
            <person name="Vil D."/>
            <person name="Baker J."/>
            <person name="Kirchoff K."/>
            <person name="Toth K."/>
            <person name="King L."/>
            <person name="Bahret A."/>
            <person name="Miller B."/>
            <person name="Marra M.A."/>
            <person name="Martienssen R."/>
            <person name="McCombie W.R."/>
            <person name="Wilson R.K."/>
            <person name="Murphy G."/>
            <person name="Bancroft I."/>
            <person name="Volckaert G."/>
            <person name="Wambutt R."/>
            <person name="Duesterhoeft A."/>
            <person name="Stiekema W."/>
            <person name="Pohl T."/>
            <person name="Entian K.-D."/>
            <person name="Terryn N."/>
            <person name="Hartley N."/>
            <person name="Bent E."/>
            <person name="Johnson S."/>
            <person name="Langham S.-A."/>
            <person name="McCullagh B."/>
            <person name="Robben J."/>
            <person name="Grymonprez B."/>
            <person name="Zimmermann W."/>
            <person name="Ramsperger U."/>
            <person name="Wedler H."/>
            <person name="Balke K."/>
            <person name="Wedler E."/>
            <person name="Peters S."/>
            <person name="van Staveren M."/>
            <person name="Dirkse W."/>
            <person name="Mooijman P."/>
            <person name="Klein Lankhorst R."/>
            <person name="Weitzenegger T."/>
            <person name="Bothe G."/>
            <person name="Rose M."/>
            <person name="Hauf J."/>
            <person name="Berneiser S."/>
            <person name="Hempel S."/>
            <person name="Feldpausch M."/>
            <person name="Lamberth S."/>
            <person name="Villarroel R."/>
            <person name="Gielen J."/>
            <person name="Ardiles W."/>
            <person name="Bents O."/>
            <person name="Lemcke K."/>
            <person name="Kolesov G."/>
            <person name="Mayer K.F.X."/>
            <person name="Rudd S."/>
            <person name="Schoof H."/>
            <person name="Schueller C."/>
            <person name="Zaccaria P."/>
            <person name="Mewes H.-W."/>
            <person name="Bevan M."/>
            <person name="Fransz P.F."/>
        </authorList>
    </citation>
    <scope>NUCLEOTIDE SEQUENCE [LARGE SCALE GENOMIC DNA]</scope>
    <source>
        <strain>cv. Columbia</strain>
    </source>
</reference>
<reference key="2">
    <citation type="journal article" date="2017" name="Plant J.">
        <title>Araport11: a complete reannotation of the Arabidopsis thaliana reference genome.</title>
        <authorList>
            <person name="Cheng C.Y."/>
            <person name="Krishnakumar V."/>
            <person name="Chan A.P."/>
            <person name="Thibaud-Nissen F."/>
            <person name="Schobel S."/>
            <person name="Town C.D."/>
        </authorList>
    </citation>
    <scope>GENOME REANNOTATION</scope>
    <source>
        <strain>cv. Columbia</strain>
    </source>
</reference>
<reference key="3">
    <citation type="journal article" date="2003" name="Trends Plant Sci.">
        <title>First glance at the plant APC/C, a highly conserved ubiquitin-protein ligase.</title>
        <authorList>
            <person name="Capron A."/>
            <person name="Okresz L."/>
            <person name="Genschik P."/>
        </authorList>
    </citation>
    <scope>REVIEW</scope>
</reference>
<reference key="4">
    <citation type="journal article" date="2010" name="BMC Plant Biol.">
        <title>Genomic evolution and complexity of the Anaphase-promoting Complex (APC) in land plants.</title>
        <authorList>
            <person name="Lima M.D.F."/>
            <person name="Eloy N.B."/>
            <person name="Pegoraro C."/>
            <person name="Sagit R."/>
            <person name="Rojas C."/>
            <person name="Bretz T."/>
            <person name="Vargas L."/>
            <person name="Elofsson A."/>
            <person name="de Oliveira A.C."/>
            <person name="Hemerly A.S."/>
            <person name="Ferreira P.C.G."/>
        </authorList>
    </citation>
    <scope>REVIEW</scope>
    <scope>GENE FAMILY</scope>
</reference>
<evidence type="ECO:0000250" key="1"/>
<evidence type="ECO:0000305" key="2"/>
<keyword id="KW-0131">Cell cycle</keyword>
<keyword id="KW-0132">Cell division</keyword>
<keyword id="KW-0498">Mitosis</keyword>
<keyword id="KW-0539">Nucleus</keyword>
<keyword id="KW-1185">Reference proteome</keyword>
<keyword id="KW-0677">Repeat</keyword>
<keyword id="KW-0833">Ubl conjugation pathway</keyword>
<keyword id="KW-0853">WD repeat</keyword>
<name>CDC26_ARATH</name>
<accession>F4K5R6</accession>
<feature type="chain" id="PRO_0000423311" description="Cell division cycle 20.6, cofactor of APC complex">
    <location>
        <begin position="1"/>
        <end position="428"/>
    </location>
</feature>
<feature type="repeat" description="WD 1">
    <location>
        <begin position="106"/>
        <end position="145"/>
    </location>
</feature>
<feature type="repeat" description="WD 2">
    <location>
        <begin position="150"/>
        <end position="189"/>
    </location>
</feature>
<feature type="repeat" description="WD 3">
    <location>
        <begin position="193"/>
        <end position="230"/>
    </location>
</feature>
<feature type="repeat" description="WD 4">
    <location>
        <begin position="234"/>
        <end position="273"/>
    </location>
</feature>
<feature type="repeat" description="WD 5">
    <location>
        <begin position="282"/>
        <end position="324"/>
    </location>
</feature>
<feature type="repeat" description="WD 6">
    <location>
        <begin position="326"/>
        <end position="367"/>
    </location>
</feature>
<feature type="repeat" description="WD 7">
    <location>
        <begin position="370"/>
        <end position="409"/>
    </location>
</feature>
<gene>
    <name type="primary">CDC20-6</name>
    <name type="synonym">CDC20_6</name>
    <name type="ordered locus">At5g27945</name>
    <name type="ORF">F15F15</name>
</gene>
<dbReference type="EMBL" id="AC007627">
    <property type="status" value="NOT_ANNOTATED_CDS"/>
    <property type="molecule type" value="Genomic_DNA"/>
</dbReference>
<dbReference type="EMBL" id="CP002688">
    <property type="protein sequence ID" value="AED93749.1"/>
    <property type="molecule type" value="Genomic_DNA"/>
</dbReference>
<dbReference type="RefSeq" id="NP_568505.1">
    <property type="nucleotide sequence ID" value="NM_122677.1"/>
</dbReference>
<dbReference type="SMR" id="F4K5R6"/>
<dbReference type="FunCoup" id="F4K5R6">
    <property type="interactions" value="1606"/>
</dbReference>
<dbReference type="STRING" id="3702.F4K5R6"/>
<dbReference type="PaxDb" id="3702-AT5G27945.1"/>
<dbReference type="ProteomicsDB" id="220602"/>
<dbReference type="EnsemblPlants" id="AT5G27945.1">
    <property type="protein sequence ID" value="AT5G27945.1"/>
    <property type="gene ID" value="AT5G27945"/>
</dbReference>
<dbReference type="GeneID" id="832862"/>
<dbReference type="Gramene" id="AT5G27945.1">
    <property type="protein sequence ID" value="AT5G27945.1"/>
    <property type="gene ID" value="AT5G27945"/>
</dbReference>
<dbReference type="KEGG" id="ath:AT5G27945"/>
<dbReference type="Araport" id="AT5G27945"/>
<dbReference type="TAIR" id="AT5G27945"/>
<dbReference type="eggNOG" id="KOG0305">
    <property type="taxonomic scope" value="Eukaryota"/>
</dbReference>
<dbReference type="HOGENOM" id="CLU_641511_0_0_1"/>
<dbReference type="InParanoid" id="F4K5R6"/>
<dbReference type="PhylomeDB" id="F4K5R6"/>
<dbReference type="UniPathway" id="UPA00143"/>
<dbReference type="PRO" id="PR:F4K5R6"/>
<dbReference type="Proteomes" id="UP000006548">
    <property type="component" value="Chromosome 5"/>
</dbReference>
<dbReference type="GO" id="GO:0005634">
    <property type="term" value="C:nucleus"/>
    <property type="evidence" value="ECO:0007669"/>
    <property type="project" value="UniProtKB-SubCell"/>
</dbReference>
<dbReference type="GO" id="GO:0010997">
    <property type="term" value="F:anaphase-promoting complex binding"/>
    <property type="evidence" value="ECO:0007669"/>
    <property type="project" value="InterPro"/>
</dbReference>
<dbReference type="GO" id="GO:0097027">
    <property type="term" value="F:ubiquitin-protein transferase activator activity"/>
    <property type="evidence" value="ECO:0007669"/>
    <property type="project" value="InterPro"/>
</dbReference>
<dbReference type="GO" id="GO:0051301">
    <property type="term" value="P:cell division"/>
    <property type="evidence" value="ECO:0007669"/>
    <property type="project" value="UniProtKB-KW"/>
</dbReference>
<dbReference type="GO" id="GO:0016567">
    <property type="term" value="P:protein ubiquitination"/>
    <property type="evidence" value="ECO:0007669"/>
    <property type="project" value="UniProtKB-UniPathway"/>
</dbReference>
<dbReference type="Gene3D" id="2.130.10.10">
    <property type="entry name" value="YVTN repeat-like/Quinoprotein amine dehydrogenase"/>
    <property type="match status" value="1"/>
</dbReference>
<dbReference type="InterPro" id="IPR033010">
    <property type="entry name" value="Cdc20/Fizzy"/>
</dbReference>
<dbReference type="InterPro" id="IPR015943">
    <property type="entry name" value="WD40/YVTN_repeat-like_dom_sf"/>
</dbReference>
<dbReference type="InterPro" id="IPR056150">
    <property type="entry name" value="WD40_CDC20-Fz"/>
</dbReference>
<dbReference type="InterPro" id="IPR019775">
    <property type="entry name" value="WD40_repeat_CS"/>
</dbReference>
<dbReference type="InterPro" id="IPR036322">
    <property type="entry name" value="WD40_repeat_dom_sf"/>
</dbReference>
<dbReference type="InterPro" id="IPR001680">
    <property type="entry name" value="WD40_rpt"/>
</dbReference>
<dbReference type="PANTHER" id="PTHR19918">
    <property type="entry name" value="CELL DIVISION CYCLE 20 CDC20 FIZZY -RELATED"/>
    <property type="match status" value="1"/>
</dbReference>
<dbReference type="PANTHER" id="PTHR19918:SF8">
    <property type="entry name" value="FI02843P"/>
    <property type="match status" value="1"/>
</dbReference>
<dbReference type="Pfam" id="PF24807">
    <property type="entry name" value="WD40_CDC20-Fz"/>
    <property type="match status" value="1"/>
</dbReference>
<dbReference type="SMART" id="SM00320">
    <property type="entry name" value="WD40"/>
    <property type="match status" value="6"/>
</dbReference>
<dbReference type="SUPFAM" id="SSF50978">
    <property type="entry name" value="WD40 repeat-like"/>
    <property type="match status" value="1"/>
</dbReference>
<dbReference type="PROSITE" id="PS00678">
    <property type="entry name" value="WD_REPEATS_1"/>
    <property type="match status" value="2"/>
</dbReference>
<dbReference type="PROSITE" id="PS50082">
    <property type="entry name" value="WD_REPEATS_2"/>
    <property type="match status" value="3"/>
</dbReference>
<dbReference type="PROSITE" id="PS50294">
    <property type="entry name" value="WD_REPEATS_REGION"/>
    <property type="match status" value="1"/>
</dbReference>
<sequence length="428" mass="47694">MMKSIALALCLTHHSPMVLSIVDYGDSQEKTIDSLWKKPHGSDLTWSGFSRVGVTEAYFAVPVDHFLTNPPSLRLSQTIYCRRGSSYVETEKVEEEDRDDFLKQVWFLTDNLVFFFVDIEEYIVIEQLGDTVYLWDASSCYTSKLVTIDDENGPVTSINWTQDGLDLAVGLDNSEVQVWDCVSNRHVRTLRGGHESRVGSLAWNNHILTTGGMDGKIVNNDVRIRSSIIGTYVGHTEEVCGLKWSESGKKLASGGNDNVVHIWDRSLASSNPTRQWLHRFEEHTAAVRALAWCPFQASLLATGGGVGDGKINFWNTHTGACLNSVETGSQVCSLLWSKSERELLSAHGFTQNQLTLWKYPSMVKMAELNGHTSRVLFMAQSPDGCTVASAAGDETLRLWNVFGEPPKTTKKAASKKYTEPFAHVNHIR</sequence>
<protein>
    <recommendedName>
        <fullName>Cell division cycle 20.6, cofactor of APC complex</fullName>
        <shortName>AtCDC20.6</shortName>
    </recommendedName>
</protein>
<proteinExistence type="inferred from homology"/>
<comment type="function">
    <text evidence="1">Component of the anaphase promoting complex/cyclosome (APC/C), a cell cycle-regulated E3 ubiquitin-protein ligase complex that controls progression through mitosis and the G1 phase of the cell cycle.</text>
</comment>
<comment type="pathway">
    <text>Protein modification; protein ubiquitination.</text>
</comment>
<comment type="subunit">
    <text evidence="1">The APC/C is composed of at least 11 subunits that stay tightly associated throughout the cell cycle.</text>
</comment>
<comment type="subcellular location">
    <subcellularLocation>
        <location evidence="1">Nucleus</location>
    </subcellularLocation>
</comment>
<comment type="similarity">
    <text evidence="2">Belongs to the WD repeat CDC20/Fizzy family.</text>
</comment>
<comment type="online information" name="Arabidopsis APC/C subunits">
    <link uri="http://personal.rhul.ac.uk/ujba/110/apc/APC.htm"/>
</comment>
<organism>
    <name type="scientific">Arabidopsis thaliana</name>
    <name type="common">Mouse-ear cress</name>
    <dbReference type="NCBI Taxonomy" id="3702"/>
    <lineage>
        <taxon>Eukaryota</taxon>
        <taxon>Viridiplantae</taxon>
        <taxon>Streptophyta</taxon>
        <taxon>Embryophyta</taxon>
        <taxon>Tracheophyta</taxon>
        <taxon>Spermatophyta</taxon>
        <taxon>Magnoliopsida</taxon>
        <taxon>eudicotyledons</taxon>
        <taxon>Gunneridae</taxon>
        <taxon>Pentapetalae</taxon>
        <taxon>rosids</taxon>
        <taxon>malvids</taxon>
        <taxon>Brassicales</taxon>
        <taxon>Brassicaceae</taxon>
        <taxon>Camelineae</taxon>
        <taxon>Arabidopsis</taxon>
    </lineage>
</organism>